<keyword id="KW-0315">Glutamine amidotransferase</keyword>
<keyword id="KW-0378">Hydrolase</keyword>
<keyword id="KW-0456">Lyase</keyword>
<keyword id="KW-0663">Pyridoxal phosphate</keyword>
<protein>
    <recommendedName>
        <fullName evidence="1">Pyridoxal 5'-phosphate synthase subunit PdxT</fullName>
        <ecNumber evidence="1">4.3.3.6</ecNumber>
    </recommendedName>
    <alternativeName>
        <fullName evidence="1">Pdx2</fullName>
    </alternativeName>
    <alternativeName>
        <fullName evidence="1">Pyridoxal 5'-phosphate synthase glutaminase subunit</fullName>
        <ecNumber evidence="1">3.5.1.2</ecNumber>
    </alternativeName>
</protein>
<proteinExistence type="inferred from homology"/>
<sequence length="186" mass="20630">MKIGVLALQGAVREHIRHIELSGHEGIAVKKVEQLEEIEGLILPGGESTTLRRLMNLYGFKEALQNSTLPMFGTCAGLIVLAQDIVGEEGYLNKLNITVQRNSFGRQVDSFETELDIKGIATDIEGVFIRAPHIEKVGQGVDILCKVNEKIVAVQQGKYLGVSFHPELTDDYRVTDYFINHIVKKA</sequence>
<gene>
    <name evidence="1" type="primary">pdxT</name>
    <name type="ordered locus">SAB0470</name>
</gene>
<organism>
    <name type="scientific">Staphylococcus aureus (strain bovine RF122 / ET3-1)</name>
    <dbReference type="NCBI Taxonomy" id="273036"/>
    <lineage>
        <taxon>Bacteria</taxon>
        <taxon>Bacillati</taxon>
        <taxon>Bacillota</taxon>
        <taxon>Bacilli</taxon>
        <taxon>Bacillales</taxon>
        <taxon>Staphylococcaceae</taxon>
        <taxon>Staphylococcus</taxon>
    </lineage>
</organism>
<reference key="1">
    <citation type="journal article" date="2007" name="PLoS ONE">
        <title>Molecular correlates of host specialization in Staphylococcus aureus.</title>
        <authorList>
            <person name="Herron-Olson L."/>
            <person name="Fitzgerald J.R."/>
            <person name="Musser J.M."/>
            <person name="Kapur V."/>
        </authorList>
    </citation>
    <scope>NUCLEOTIDE SEQUENCE [LARGE SCALE GENOMIC DNA]</scope>
    <source>
        <strain>bovine RF122 / ET3-1</strain>
    </source>
</reference>
<accession>Q2YSE1</accession>
<name>PDXT_STAAB</name>
<dbReference type="EC" id="4.3.3.6" evidence="1"/>
<dbReference type="EC" id="3.5.1.2" evidence="1"/>
<dbReference type="EMBL" id="AJ938182">
    <property type="protein sequence ID" value="CAI80158.1"/>
    <property type="molecule type" value="Genomic_DNA"/>
</dbReference>
<dbReference type="RefSeq" id="WP_000690439.1">
    <property type="nucleotide sequence ID" value="NC_007622.1"/>
</dbReference>
<dbReference type="SMR" id="Q2YSE1"/>
<dbReference type="KEGG" id="sab:SAB0470"/>
<dbReference type="HOGENOM" id="CLU_069674_2_0_9"/>
<dbReference type="UniPathway" id="UPA00245"/>
<dbReference type="GO" id="GO:0005829">
    <property type="term" value="C:cytosol"/>
    <property type="evidence" value="ECO:0007669"/>
    <property type="project" value="TreeGrafter"/>
</dbReference>
<dbReference type="GO" id="GO:1903600">
    <property type="term" value="C:glutaminase complex"/>
    <property type="evidence" value="ECO:0007669"/>
    <property type="project" value="TreeGrafter"/>
</dbReference>
<dbReference type="GO" id="GO:0004359">
    <property type="term" value="F:glutaminase activity"/>
    <property type="evidence" value="ECO:0007669"/>
    <property type="project" value="UniProtKB-UniRule"/>
</dbReference>
<dbReference type="GO" id="GO:0036381">
    <property type="term" value="F:pyridoxal 5'-phosphate synthase (glutamine hydrolysing) activity"/>
    <property type="evidence" value="ECO:0007669"/>
    <property type="project" value="UniProtKB-UniRule"/>
</dbReference>
<dbReference type="GO" id="GO:0006543">
    <property type="term" value="P:glutamine catabolic process"/>
    <property type="evidence" value="ECO:0007669"/>
    <property type="project" value="UniProtKB-UniRule"/>
</dbReference>
<dbReference type="GO" id="GO:0042823">
    <property type="term" value="P:pyridoxal phosphate biosynthetic process"/>
    <property type="evidence" value="ECO:0007669"/>
    <property type="project" value="UniProtKB-UniRule"/>
</dbReference>
<dbReference type="GO" id="GO:0008614">
    <property type="term" value="P:pyridoxine metabolic process"/>
    <property type="evidence" value="ECO:0007669"/>
    <property type="project" value="TreeGrafter"/>
</dbReference>
<dbReference type="CDD" id="cd01749">
    <property type="entry name" value="GATase1_PB"/>
    <property type="match status" value="1"/>
</dbReference>
<dbReference type="FunFam" id="3.40.50.880:FF:000010">
    <property type="entry name" value="uncharacterized protein LOC100176842 isoform X2"/>
    <property type="match status" value="1"/>
</dbReference>
<dbReference type="Gene3D" id="3.40.50.880">
    <property type="match status" value="1"/>
</dbReference>
<dbReference type="HAMAP" id="MF_01615">
    <property type="entry name" value="PdxT"/>
    <property type="match status" value="1"/>
</dbReference>
<dbReference type="InterPro" id="IPR029062">
    <property type="entry name" value="Class_I_gatase-like"/>
</dbReference>
<dbReference type="InterPro" id="IPR002161">
    <property type="entry name" value="PdxT/SNO"/>
</dbReference>
<dbReference type="InterPro" id="IPR021196">
    <property type="entry name" value="PdxT/SNO_CS"/>
</dbReference>
<dbReference type="NCBIfam" id="TIGR03800">
    <property type="entry name" value="PLP_synth_Pdx2"/>
    <property type="match status" value="1"/>
</dbReference>
<dbReference type="PANTHER" id="PTHR31559">
    <property type="entry name" value="PYRIDOXAL 5'-PHOSPHATE SYNTHASE SUBUNIT SNO"/>
    <property type="match status" value="1"/>
</dbReference>
<dbReference type="PANTHER" id="PTHR31559:SF0">
    <property type="entry name" value="PYRIDOXAL 5'-PHOSPHATE SYNTHASE SUBUNIT SNO1-RELATED"/>
    <property type="match status" value="1"/>
</dbReference>
<dbReference type="Pfam" id="PF01174">
    <property type="entry name" value="SNO"/>
    <property type="match status" value="1"/>
</dbReference>
<dbReference type="PIRSF" id="PIRSF005639">
    <property type="entry name" value="Glut_amidoT_SNO"/>
    <property type="match status" value="1"/>
</dbReference>
<dbReference type="SUPFAM" id="SSF52317">
    <property type="entry name" value="Class I glutamine amidotransferase-like"/>
    <property type="match status" value="1"/>
</dbReference>
<dbReference type="PROSITE" id="PS01236">
    <property type="entry name" value="PDXT_SNO_1"/>
    <property type="match status" value="1"/>
</dbReference>
<dbReference type="PROSITE" id="PS51130">
    <property type="entry name" value="PDXT_SNO_2"/>
    <property type="match status" value="1"/>
</dbReference>
<evidence type="ECO:0000255" key="1">
    <source>
        <dbReference type="HAMAP-Rule" id="MF_01615"/>
    </source>
</evidence>
<feature type="chain" id="PRO_0000255837" description="Pyridoxal 5'-phosphate synthase subunit PdxT">
    <location>
        <begin position="1"/>
        <end position="186"/>
    </location>
</feature>
<feature type="active site" description="Nucleophile" evidence="1">
    <location>
        <position position="75"/>
    </location>
</feature>
<feature type="active site" description="Charge relay system" evidence="1">
    <location>
        <position position="165"/>
    </location>
</feature>
<feature type="active site" description="Charge relay system" evidence="1">
    <location>
        <position position="167"/>
    </location>
</feature>
<feature type="binding site" evidence="1">
    <location>
        <begin position="46"/>
        <end position="48"/>
    </location>
    <ligand>
        <name>L-glutamine</name>
        <dbReference type="ChEBI" id="CHEBI:58359"/>
    </ligand>
</feature>
<feature type="binding site" evidence="1">
    <location>
        <position position="101"/>
    </location>
    <ligand>
        <name>L-glutamine</name>
        <dbReference type="ChEBI" id="CHEBI:58359"/>
    </ligand>
</feature>
<feature type="binding site" evidence="1">
    <location>
        <begin position="129"/>
        <end position="130"/>
    </location>
    <ligand>
        <name>L-glutamine</name>
        <dbReference type="ChEBI" id="CHEBI:58359"/>
    </ligand>
</feature>
<comment type="function">
    <text evidence="1">Catalyzes the hydrolysis of glutamine to glutamate and ammonia as part of the biosynthesis of pyridoxal 5'-phosphate. The resulting ammonia molecule is channeled to the active site of PdxS.</text>
</comment>
<comment type="catalytic activity">
    <reaction evidence="1">
        <text>aldehydo-D-ribose 5-phosphate + D-glyceraldehyde 3-phosphate + L-glutamine = pyridoxal 5'-phosphate + L-glutamate + phosphate + 3 H2O + H(+)</text>
        <dbReference type="Rhea" id="RHEA:31507"/>
        <dbReference type="ChEBI" id="CHEBI:15377"/>
        <dbReference type="ChEBI" id="CHEBI:15378"/>
        <dbReference type="ChEBI" id="CHEBI:29985"/>
        <dbReference type="ChEBI" id="CHEBI:43474"/>
        <dbReference type="ChEBI" id="CHEBI:58273"/>
        <dbReference type="ChEBI" id="CHEBI:58359"/>
        <dbReference type="ChEBI" id="CHEBI:59776"/>
        <dbReference type="ChEBI" id="CHEBI:597326"/>
        <dbReference type="EC" id="4.3.3.6"/>
    </reaction>
</comment>
<comment type="catalytic activity">
    <reaction evidence="1">
        <text>L-glutamine + H2O = L-glutamate + NH4(+)</text>
        <dbReference type="Rhea" id="RHEA:15889"/>
        <dbReference type="ChEBI" id="CHEBI:15377"/>
        <dbReference type="ChEBI" id="CHEBI:28938"/>
        <dbReference type="ChEBI" id="CHEBI:29985"/>
        <dbReference type="ChEBI" id="CHEBI:58359"/>
        <dbReference type="EC" id="3.5.1.2"/>
    </reaction>
</comment>
<comment type="pathway">
    <text evidence="1">Cofactor biosynthesis; pyridoxal 5'-phosphate biosynthesis.</text>
</comment>
<comment type="subunit">
    <text evidence="1">In the presence of PdxS, forms a dodecamer of heterodimers. Only shows activity in the heterodimer.</text>
</comment>
<comment type="similarity">
    <text evidence="1">Belongs to the glutaminase PdxT/SNO family.</text>
</comment>